<protein>
    <recommendedName>
        <fullName evidence="1">ATP phosphoribosyltransferase</fullName>
        <shortName evidence="1">ATP-PRT</shortName>
        <shortName evidence="1">ATP-PRTase</shortName>
        <ecNumber evidence="1">2.4.2.17</ecNumber>
    </recommendedName>
</protein>
<keyword id="KW-0028">Amino-acid biosynthesis</keyword>
<keyword id="KW-0067">ATP-binding</keyword>
<keyword id="KW-0963">Cytoplasm</keyword>
<keyword id="KW-0328">Glycosyltransferase</keyword>
<keyword id="KW-0368">Histidine biosynthesis</keyword>
<keyword id="KW-0547">Nucleotide-binding</keyword>
<keyword id="KW-0808">Transferase</keyword>
<accession>Q2FDI2</accession>
<dbReference type="EC" id="2.4.2.17" evidence="1"/>
<dbReference type="EMBL" id="CP000255">
    <property type="protein sequence ID" value="ABD22581.1"/>
    <property type="molecule type" value="Genomic_DNA"/>
</dbReference>
<dbReference type="RefSeq" id="WP_000944150.1">
    <property type="nucleotide sequence ID" value="NZ_CP027476.1"/>
</dbReference>
<dbReference type="SMR" id="Q2FDI2"/>
<dbReference type="KEGG" id="saa:SAUSA300_2612"/>
<dbReference type="HOGENOM" id="CLU_038115_2_0_9"/>
<dbReference type="OMA" id="YVMMDYD"/>
<dbReference type="UniPathway" id="UPA00031">
    <property type="reaction ID" value="UER00006"/>
</dbReference>
<dbReference type="Proteomes" id="UP000001939">
    <property type="component" value="Chromosome"/>
</dbReference>
<dbReference type="GO" id="GO:0005737">
    <property type="term" value="C:cytoplasm"/>
    <property type="evidence" value="ECO:0007669"/>
    <property type="project" value="UniProtKB-SubCell"/>
</dbReference>
<dbReference type="GO" id="GO:0005524">
    <property type="term" value="F:ATP binding"/>
    <property type="evidence" value="ECO:0007669"/>
    <property type="project" value="UniProtKB-KW"/>
</dbReference>
<dbReference type="GO" id="GO:0003879">
    <property type="term" value="F:ATP phosphoribosyltransferase activity"/>
    <property type="evidence" value="ECO:0007669"/>
    <property type="project" value="UniProtKB-UniRule"/>
</dbReference>
<dbReference type="GO" id="GO:0000105">
    <property type="term" value="P:L-histidine biosynthetic process"/>
    <property type="evidence" value="ECO:0007669"/>
    <property type="project" value="UniProtKB-UniRule"/>
</dbReference>
<dbReference type="CDD" id="cd13595">
    <property type="entry name" value="PBP2_HisGs"/>
    <property type="match status" value="1"/>
</dbReference>
<dbReference type="FunFam" id="3.40.190.10:FF:000008">
    <property type="entry name" value="ATP phosphoribosyltransferase"/>
    <property type="match status" value="1"/>
</dbReference>
<dbReference type="Gene3D" id="3.40.190.10">
    <property type="entry name" value="Periplasmic binding protein-like II"/>
    <property type="match status" value="2"/>
</dbReference>
<dbReference type="HAMAP" id="MF_01018">
    <property type="entry name" value="HisG_Short"/>
    <property type="match status" value="1"/>
</dbReference>
<dbReference type="InterPro" id="IPR013820">
    <property type="entry name" value="ATP_PRibTrfase_cat"/>
</dbReference>
<dbReference type="InterPro" id="IPR001348">
    <property type="entry name" value="ATP_PRibTrfase_HisG"/>
</dbReference>
<dbReference type="InterPro" id="IPR024893">
    <property type="entry name" value="ATP_PRibTrfase_HisG_short"/>
</dbReference>
<dbReference type="NCBIfam" id="TIGR00070">
    <property type="entry name" value="hisG"/>
    <property type="match status" value="1"/>
</dbReference>
<dbReference type="PANTHER" id="PTHR21403:SF8">
    <property type="entry name" value="ATP PHOSPHORIBOSYLTRANSFERASE"/>
    <property type="match status" value="1"/>
</dbReference>
<dbReference type="PANTHER" id="PTHR21403">
    <property type="entry name" value="ATP PHOSPHORIBOSYLTRANSFERASE ATP-PRTASE"/>
    <property type="match status" value="1"/>
</dbReference>
<dbReference type="Pfam" id="PF01634">
    <property type="entry name" value="HisG"/>
    <property type="match status" value="1"/>
</dbReference>
<dbReference type="SUPFAM" id="SSF53850">
    <property type="entry name" value="Periplasmic binding protein-like II"/>
    <property type="match status" value="1"/>
</dbReference>
<reference key="1">
    <citation type="journal article" date="2006" name="Lancet">
        <title>Complete genome sequence of USA300, an epidemic clone of community-acquired meticillin-resistant Staphylococcus aureus.</title>
        <authorList>
            <person name="Diep B.A."/>
            <person name="Gill S.R."/>
            <person name="Chang R.F."/>
            <person name="Phan T.H."/>
            <person name="Chen J.H."/>
            <person name="Davidson M.G."/>
            <person name="Lin F."/>
            <person name="Lin J."/>
            <person name="Carleton H.A."/>
            <person name="Mongodin E.F."/>
            <person name="Sensabaugh G.F."/>
            <person name="Perdreau-Remington F."/>
        </authorList>
    </citation>
    <scope>NUCLEOTIDE SEQUENCE [LARGE SCALE GENOMIC DNA]</scope>
    <source>
        <strain>USA300</strain>
    </source>
</reference>
<feature type="chain" id="PRO_1000063310" description="ATP phosphoribosyltransferase">
    <location>
        <begin position="1"/>
        <end position="204"/>
    </location>
</feature>
<comment type="function">
    <text evidence="1">Catalyzes the condensation of ATP and 5-phosphoribose 1-diphosphate to form N'-(5'-phosphoribosyl)-ATP (PR-ATP). Has a crucial role in the pathway because the rate of histidine biosynthesis seems to be controlled primarily by regulation of HisG enzymatic activity.</text>
</comment>
<comment type="catalytic activity">
    <reaction evidence="1">
        <text>1-(5-phospho-beta-D-ribosyl)-ATP + diphosphate = 5-phospho-alpha-D-ribose 1-diphosphate + ATP</text>
        <dbReference type="Rhea" id="RHEA:18473"/>
        <dbReference type="ChEBI" id="CHEBI:30616"/>
        <dbReference type="ChEBI" id="CHEBI:33019"/>
        <dbReference type="ChEBI" id="CHEBI:58017"/>
        <dbReference type="ChEBI" id="CHEBI:73183"/>
        <dbReference type="EC" id="2.4.2.17"/>
    </reaction>
</comment>
<comment type="pathway">
    <text evidence="1">Amino-acid biosynthesis; L-histidine biosynthesis; L-histidine from 5-phospho-alpha-D-ribose 1-diphosphate: step 1/9.</text>
</comment>
<comment type="subunit">
    <text evidence="1">Heteromultimer composed of HisG and HisZ subunits.</text>
</comment>
<comment type="subcellular location">
    <subcellularLocation>
        <location evidence="1">Cytoplasm</location>
    </subcellularLocation>
</comment>
<comment type="domain">
    <text>Lacks the C-terminal regulatory region which is replaced by HisZ.</text>
</comment>
<comment type="similarity">
    <text evidence="1">Belongs to the ATP phosphoribosyltransferase family. Short subfamily.</text>
</comment>
<gene>
    <name evidence="1" type="primary">hisG</name>
    <name type="ordered locus">SAUSA300_2612</name>
</gene>
<evidence type="ECO:0000255" key="1">
    <source>
        <dbReference type="HAMAP-Rule" id="MF_01018"/>
    </source>
</evidence>
<proteinExistence type="inferred from homology"/>
<sequence length="204" mass="22597">MLRIAIAKGRLMDSLINYLDVIEYTTLSETLKNRERQLLLSVDNIECILVKGSDVPIYVEQGMADIGIVGSDILDERQYNVNNLLNMPFGACHFAVAAKPETTNYRKIATSYVHTAETYFKSKGIDVELIKLNGSVELAGVVDMVDGIVDIVQTGTTLKANGLVEKQHISDINARLITNKAAYFKKSQLIEQFIRSLEVSIANA</sequence>
<organism>
    <name type="scientific">Staphylococcus aureus (strain USA300)</name>
    <dbReference type="NCBI Taxonomy" id="367830"/>
    <lineage>
        <taxon>Bacteria</taxon>
        <taxon>Bacillati</taxon>
        <taxon>Bacillota</taxon>
        <taxon>Bacilli</taxon>
        <taxon>Bacillales</taxon>
        <taxon>Staphylococcaceae</taxon>
        <taxon>Staphylococcus</taxon>
    </lineage>
</organism>
<name>HIS1_STAA3</name>